<feature type="chain" id="PRO_0000132692" description="Small ribosomal subunit protein uS4">
    <location>
        <begin position="1"/>
        <end position="194"/>
    </location>
</feature>
<feature type="domain" description="S4 RNA-binding" evidence="3">
    <location>
        <begin position="108"/>
        <end position="182"/>
    </location>
</feature>
<feature type="region of interest" description="Disordered" evidence="4">
    <location>
        <begin position="162"/>
        <end position="194"/>
    </location>
</feature>
<feature type="modified residue" description="N6-acetyllysine" evidence="2">
    <location>
        <position position="66"/>
    </location>
</feature>
<feature type="modified residue" description="N6-acetyllysine" evidence="2">
    <location>
        <position position="116"/>
    </location>
</feature>
<feature type="modified residue" description="Phosphoserine" evidence="1">
    <location>
        <position position="153"/>
    </location>
</feature>
<feature type="modified residue" description="N6-acetyllysine" evidence="1">
    <location>
        <position position="155"/>
    </location>
</feature>
<feature type="modified residue" description="Phosphoserine" evidence="1">
    <location>
        <position position="163"/>
    </location>
</feature>
<feature type="cross-link" description="Glycyl lysine isopeptide (Lys-Gly) (interchain with G-Cter in SUMO2)" evidence="1">
    <location>
        <position position="93"/>
    </location>
</feature>
<feature type="cross-link" description="Glycyl lysine isopeptide (Lys-Gly) (interchain with G-Cter in SUMO2)" evidence="1">
    <location>
        <position position="139"/>
    </location>
</feature>
<feature type="sequence conflict" description="In Ref. 1; CAA47013." evidence="5" ref="1">
    <original>R</original>
    <variation>L</variation>
    <location>
        <position position="138"/>
    </location>
</feature>
<feature type="sequence conflict" description="In Ref. 1; CAA47013." evidence="5" ref="1">
    <original>R</original>
    <variation>L</variation>
    <location>
        <position position="162"/>
    </location>
</feature>
<reference key="1">
    <citation type="journal article" date="1993" name="Biochem. Biophys. Res. Commun.">
        <title>The primary structure of rat ribosomal protein S9.</title>
        <authorList>
            <person name="Chan Y.-L."/>
            <person name="Paz V."/>
            <person name="Olvera J."/>
            <person name="Wool I.G."/>
        </authorList>
    </citation>
    <scope>NUCLEOTIDE SEQUENCE [MRNA]</scope>
    <scope>PARTIAL PROTEIN SEQUENCE</scope>
    <source>
        <strain>Sprague-Dawley</strain>
        <tissue>Liver</tissue>
    </source>
</reference>
<reference key="2">
    <citation type="journal article" date="2004" name="Genome Res.">
        <title>The status, quality, and expansion of the NIH full-length cDNA project: the Mammalian Gene Collection (MGC).</title>
        <authorList>
            <consortium name="The MGC Project Team"/>
        </authorList>
    </citation>
    <scope>NUCLEOTIDE SEQUENCE [LARGE SCALE MRNA]</scope>
    <source>
        <tissue>Pituitary</tissue>
    </source>
</reference>
<organism>
    <name type="scientific">Rattus norvegicus</name>
    <name type="common">Rat</name>
    <dbReference type="NCBI Taxonomy" id="10116"/>
    <lineage>
        <taxon>Eukaryota</taxon>
        <taxon>Metazoa</taxon>
        <taxon>Chordata</taxon>
        <taxon>Craniata</taxon>
        <taxon>Vertebrata</taxon>
        <taxon>Euteleostomi</taxon>
        <taxon>Mammalia</taxon>
        <taxon>Eutheria</taxon>
        <taxon>Euarchontoglires</taxon>
        <taxon>Glires</taxon>
        <taxon>Rodentia</taxon>
        <taxon>Myomorpha</taxon>
        <taxon>Muroidea</taxon>
        <taxon>Muridae</taxon>
        <taxon>Murinae</taxon>
        <taxon>Rattus</taxon>
    </lineage>
</organism>
<keyword id="KW-0007">Acetylation</keyword>
<keyword id="KW-0963">Cytoplasm</keyword>
<keyword id="KW-0903">Direct protein sequencing</keyword>
<keyword id="KW-1017">Isopeptide bond</keyword>
<keyword id="KW-0539">Nucleus</keyword>
<keyword id="KW-0597">Phosphoprotein</keyword>
<keyword id="KW-1185">Reference proteome</keyword>
<keyword id="KW-0687">Ribonucleoprotein</keyword>
<keyword id="KW-0689">Ribosomal protein</keyword>
<keyword id="KW-0694">RNA-binding</keyword>
<keyword id="KW-0699">rRNA-binding</keyword>
<keyword id="KW-0832">Ubl conjugation</keyword>
<dbReference type="EMBL" id="X66370">
    <property type="protein sequence ID" value="CAA47013.1"/>
    <property type="molecule type" value="mRNA"/>
</dbReference>
<dbReference type="EMBL" id="BC060560">
    <property type="protein sequence ID" value="AAH60560.1"/>
    <property type="molecule type" value="mRNA"/>
</dbReference>
<dbReference type="PIR" id="JN0587">
    <property type="entry name" value="S21497"/>
</dbReference>
<dbReference type="RefSeq" id="NP_001300864.1">
    <property type="nucleotide sequence ID" value="NM_001313935.2"/>
</dbReference>
<dbReference type="RefSeq" id="NP_112370.2">
    <property type="nucleotide sequence ID" value="NM_031108.4"/>
</dbReference>
<dbReference type="SMR" id="P29314"/>
<dbReference type="BioGRID" id="249644">
    <property type="interactions" value="5"/>
</dbReference>
<dbReference type="FunCoup" id="P29314">
    <property type="interactions" value="2291"/>
</dbReference>
<dbReference type="IntAct" id="P29314">
    <property type="interactions" value="8"/>
</dbReference>
<dbReference type="STRING" id="10116.ENSRNOP00000074779"/>
<dbReference type="GlyGen" id="P29314">
    <property type="glycosylation" value="1 site"/>
</dbReference>
<dbReference type="iPTMnet" id="P29314"/>
<dbReference type="PhosphoSitePlus" id="P29314"/>
<dbReference type="jPOST" id="P29314"/>
<dbReference type="PaxDb" id="10116-ENSRNOP00000015234"/>
<dbReference type="Ensembl" id="ENSRNOT00000086622.2">
    <property type="protein sequence ID" value="ENSRNOP00000074779.1"/>
    <property type="gene ID" value="ENSRNOG00000058909.2"/>
</dbReference>
<dbReference type="GeneID" id="103689992"/>
<dbReference type="KEGG" id="rno:103689992"/>
<dbReference type="UCSC" id="RGD:619889">
    <property type="organism name" value="rat"/>
</dbReference>
<dbReference type="AGR" id="RGD:619889"/>
<dbReference type="CTD" id="6203"/>
<dbReference type="RGD" id="619889">
    <property type="gene designation" value="Rps9"/>
</dbReference>
<dbReference type="eggNOG" id="KOG3301">
    <property type="taxonomic scope" value="Eukaryota"/>
</dbReference>
<dbReference type="GeneTree" id="ENSGT00550000074829"/>
<dbReference type="HOGENOM" id="CLU_089738_0_0_1"/>
<dbReference type="InParanoid" id="P29314"/>
<dbReference type="OMA" id="RQFITHG"/>
<dbReference type="OrthoDB" id="1697570at2759"/>
<dbReference type="PhylomeDB" id="P29314"/>
<dbReference type="TreeFam" id="TF300795"/>
<dbReference type="Reactome" id="R-RNO-156827">
    <property type="pathway name" value="L13a-mediated translational silencing of Ceruloplasmin expression"/>
</dbReference>
<dbReference type="Reactome" id="R-RNO-1799339">
    <property type="pathway name" value="SRP-dependent cotranslational protein targeting to membrane"/>
</dbReference>
<dbReference type="Reactome" id="R-RNO-6791226">
    <property type="pathway name" value="Major pathway of rRNA processing in the nucleolus and cytosol"/>
</dbReference>
<dbReference type="Reactome" id="R-RNO-72649">
    <property type="pathway name" value="Translation initiation complex formation"/>
</dbReference>
<dbReference type="Reactome" id="R-RNO-72689">
    <property type="pathway name" value="Formation of a pool of free 40S subunits"/>
</dbReference>
<dbReference type="Reactome" id="R-RNO-72695">
    <property type="pathway name" value="Formation of the ternary complex, and subsequently, the 43S complex"/>
</dbReference>
<dbReference type="Reactome" id="R-RNO-72702">
    <property type="pathway name" value="Ribosomal scanning and start codon recognition"/>
</dbReference>
<dbReference type="Reactome" id="R-RNO-72706">
    <property type="pathway name" value="GTP hydrolysis and joining of the 60S ribosomal subunit"/>
</dbReference>
<dbReference type="Reactome" id="R-RNO-975956">
    <property type="pathway name" value="Nonsense Mediated Decay (NMD) independent of the Exon Junction Complex (EJC)"/>
</dbReference>
<dbReference type="Reactome" id="R-RNO-975957">
    <property type="pathway name" value="Nonsense Mediated Decay (NMD) enhanced by the Exon Junction Complex (EJC)"/>
</dbReference>
<dbReference type="PRO" id="PR:P29314"/>
<dbReference type="Proteomes" id="UP000002494">
    <property type="component" value="Chromosome 1"/>
</dbReference>
<dbReference type="Bgee" id="ENSRNOG00000058909">
    <property type="expression patterns" value="Expressed in thymus and 19 other cell types or tissues"/>
</dbReference>
<dbReference type="ExpressionAtlas" id="P29314">
    <property type="expression patterns" value="baseline and differential"/>
</dbReference>
<dbReference type="GO" id="GO:0005737">
    <property type="term" value="C:cytoplasm"/>
    <property type="evidence" value="ECO:0000266"/>
    <property type="project" value="RGD"/>
</dbReference>
<dbReference type="GO" id="GO:0022626">
    <property type="term" value="C:cytosolic ribosome"/>
    <property type="evidence" value="ECO:0000266"/>
    <property type="project" value="RGD"/>
</dbReference>
<dbReference type="GO" id="GO:0022627">
    <property type="term" value="C:cytosolic small ribosomal subunit"/>
    <property type="evidence" value="ECO:0000314"/>
    <property type="project" value="RGD"/>
</dbReference>
<dbReference type="GO" id="GO:0005730">
    <property type="term" value="C:nucleolus"/>
    <property type="evidence" value="ECO:0000266"/>
    <property type="project" value="RGD"/>
</dbReference>
<dbReference type="GO" id="GO:1990904">
    <property type="term" value="C:ribonucleoprotein complex"/>
    <property type="evidence" value="ECO:0000250"/>
    <property type="project" value="UniProtKB"/>
</dbReference>
<dbReference type="GO" id="GO:0032040">
    <property type="term" value="C:small-subunit processome"/>
    <property type="evidence" value="ECO:0000250"/>
    <property type="project" value="UniProtKB"/>
</dbReference>
<dbReference type="GO" id="GO:0045202">
    <property type="term" value="C:synapse"/>
    <property type="evidence" value="ECO:0000266"/>
    <property type="project" value="RGD"/>
</dbReference>
<dbReference type="GO" id="GO:1990932">
    <property type="term" value="F:5.8S rRNA binding"/>
    <property type="evidence" value="ECO:0000314"/>
    <property type="project" value="RGD"/>
</dbReference>
<dbReference type="GO" id="GO:0019843">
    <property type="term" value="F:rRNA binding"/>
    <property type="evidence" value="ECO:0000318"/>
    <property type="project" value="GO_Central"/>
</dbReference>
<dbReference type="GO" id="GO:0003735">
    <property type="term" value="F:structural constituent of ribosome"/>
    <property type="evidence" value="ECO:0000266"/>
    <property type="project" value="RGD"/>
</dbReference>
<dbReference type="GO" id="GO:0045182">
    <property type="term" value="F:translation regulator activity"/>
    <property type="evidence" value="ECO:0000266"/>
    <property type="project" value="RGD"/>
</dbReference>
<dbReference type="GO" id="GO:0008284">
    <property type="term" value="P:positive regulation of cell population proliferation"/>
    <property type="evidence" value="ECO:0000266"/>
    <property type="project" value="RGD"/>
</dbReference>
<dbReference type="GO" id="GO:0042274">
    <property type="term" value="P:ribosomal small subunit biogenesis"/>
    <property type="evidence" value="ECO:0000250"/>
    <property type="project" value="UniProtKB"/>
</dbReference>
<dbReference type="GO" id="GO:0006412">
    <property type="term" value="P:translation"/>
    <property type="evidence" value="ECO:0000266"/>
    <property type="project" value="RGD"/>
</dbReference>
<dbReference type="CDD" id="cd00165">
    <property type="entry name" value="S4"/>
    <property type="match status" value="1"/>
</dbReference>
<dbReference type="FunFam" id="3.10.290.10:FF:000021">
    <property type="entry name" value="40S ribosomal protein S9"/>
    <property type="match status" value="1"/>
</dbReference>
<dbReference type="Gene3D" id="3.10.290.10">
    <property type="entry name" value="RNA-binding S4 domain"/>
    <property type="match status" value="1"/>
</dbReference>
<dbReference type="InterPro" id="IPR022801">
    <property type="entry name" value="Ribosomal_uS4"/>
</dbReference>
<dbReference type="InterPro" id="IPR018079">
    <property type="entry name" value="Ribosomal_uS4_CS"/>
</dbReference>
<dbReference type="InterPro" id="IPR005710">
    <property type="entry name" value="Ribosomal_uS4_euk/arc"/>
</dbReference>
<dbReference type="InterPro" id="IPR001912">
    <property type="entry name" value="Ribosomal_uS4_N"/>
</dbReference>
<dbReference type="InterPro" id="IPR002942">
    <property type="entry name" value="S4_RNA-bd"/>
</dbReference>
<dbReference type="InterPro" id="IPR036986">
    <property type="entry name" value="S4_RNA-bd_sf"/>
</dbReference>
<dbReference type="NCBIfam" id="NF003139">
    <property type="entry name" value="PRK04051.1"/>
    <property type="match status" value="1"/>
</dbReference>
<dbReference type="NCBIfam" id="TIGR01018">
    <property type="entry name" value="uS4_arch"/>
    <property type="match status" value="1"/>
</dbReference>
<dbReference type="PANTHER" id="PTHR11831">
    <property type="entry name" value="30S 40S RIBOSOMAL PROTEIN"/>
    <property type="match status" value="1"/>
</dbReference>
<dbReference type="PANTHER" id="PTHR11831:SF46">
    <property type="entry name" value="SMALL RIBOSOMAL SUBUNIT PROTEIN US4"/>
    <property type="match status" value="1"/>
</dbReference>
<dbReference type="Pfam" id="PF00163">
    <property type="entry name" value="Ribosomal_S4"/>
    <property type="match status" value="1"/>
</dbReference>
<dbReference type="Pfam" id="PF01479">
    <property type="entry name" value="S4"/>
    <property type="match status" value="1"/>
</dbReference>
<dbReference type="SMART" id="SM01390">
    <property type="entry name" value="Ribosomal_S4"/>
    <property type="match status" value="1"/>
</dbReference>
<dbReference type="SMART" id="SM00363">
    <property type="entry name" value="S4"/>
    <property type="match status" value="1"/>
</dbReference>
<dbReference type="SUPFAM" id="SSF55174">
    <property type="entry name" value="Alpha-L RNA-binding motif"/>
    <property type="match status" value="1"/>
</dbReference>
<dbReference type="PROSITE" id="PS00632">
    <property type="entry name" value="RIBOSOMAL_S4"/>
    <property type="match status" value="1"/>
</dbReference>
<dbReference type="PROSITE" id="PS50889">
    <property type="entry name" value="S4"/>
    <property type="match status" value="1"/>
</dbReference>
<proteinExistence type="evidence at protein level"/>
<protein>
    <recommendedName>
        <fullName evidence="5">Small ribosomal subunit protein uS4</fullName>
    </recommendedName>
    <alternativeName>
        <fullName>40S ribosomal protein S9</fullName>
    </alternativeName>
</protein>
<accession>P29314</accession>
<accession>Q6P9W7</accession>
<gene>
    <name type="primary">Rps9</name>
</gene>
<evidence type="ECO:0000250" key="1">
    <source>
        <dbReference type="UniProtKB" id="P46781"/>
    </source>
</evidence>
<evidence type="ECO:0000250" key="2">
    <source>
        <dbReference type="UniProtKB" id="Q6ZWN5"/>
    </source>
</evidence>
<evidence type="ECO:0000255" key="3">
    <source>
        <dbReference type="PROSITE-ProRule" id="PRU00182"/>
    </source>
</evidence>
<evidence type="ECO:0000256" key="4">
    <source>
        <dbReference type="SAM" id="MobiDB-lite"/>
    </source>
</evidence>
<evidence type="ECO:0000305" key="5"/>
<name>RS9_RAT</name>
<sequence>MPVARSWVCRKTYVTPRRPFEKSRLDQELKLIGEYGLRNKREVWRVKFTLAKIRKAARELLTLDEKDPRRLFEGNALLRRLVRIGVLDEGKMKLDYILGLKIEDFLERRLQTQVFKLGLAKSIHHARVLIRQRHIRVRKQVVNIPSFIVRLDSQKHIDFSLRSPYGGGRPGRVKRKNAKKGQGGAGAGDDEEED</sequence>
<comment type="function">
    <text evidence="1">Component of the small ribosomal subunit. The ribosome is a large ribonucleoprotein complex responsible for the synthesis of proteins in the cell. Part of the small subunit (SSU) processome, first precursor of the small eukaryotic ribosomal subunit. During the assembly of the SSU processome in the nucleolus, many ribosome biogenesis factors, an RNA chaperone and ribosomal proteins associate with the nascent pre-rRNA and work in concert to generate RNA folding, modifications, rearrangements and cleavage as well as targeted degradation of pre-ribosomal RNA by the RNA exosome.</text>
</comment>
<comment type="subunit">
    <text evidence="1">Component of the small ribosomal subunit. Identified in a IGF2BP1-dependent mRNP granule complex containing untranslated mRNAs. Part of the small subunit (SSU) processome, composed of more than 70 proteins and the RNA chaperone small nucleolar RNA (snoRNA) U3.</text>
</comment>
<comment type="subcellular location">
    <subcellularLocation>
        <location evidence="1">Cytoplasm</location>
    </subcellularLocation>
    <subcellularLocation>
        <location evidence="1">Nucleus</location>
        <location evidence="1">Nucleolus</location>
    </subcellularLocation>
    <text evidence="1">Localized in cytoplasmic mRNP granules containing untranslated mRNAs.</text>
</comment>
<comment type="similarity">
    <text evidence="5">Belongs to the universal ribosomal protein uS4 family.</text>
</comment>